<evidence type="ECO:0000250" key="1"/>
<evidence type="ECO:0000250" key="2">
    <source>
        <dbReference type="UniProtKB" id="P03347"/>
    </source>
</evidence>
<evidence type="ECO:0000250" key="3">
    <source>
        <dbReference type="UniProtKB" id="P03366"/>
    </source>
</evidence>
<evidence type="ECO:0000250" key="4">
    <source>
        <dbReference type="UniProtKB" id="P03367"/>
    </source>
</evidence>
<evidence type="ECO:0000250" key="5">
    <source>
        <dbReference type="UniProtKB" id="P04585"/>
    </source>
</evidence>
<evidence type="ECO:0000250" key="6">
    <source>
        <dbReference type="UniProtKB" id="P12493"/>
    </source>
</evidence>
<evidence type="ECO:0000250" key="7">
    <source>
        <dbReference type="UniProtKB" id="P12497"/>
    </source>
</evidence>
<evidence type="ECO:0000255" key="8"/>
<evidence type="ECO:0000255" key="9">
    <source>
        <dbReference type="PROSITE-ProRule" id="PRU00047"/>
    </source>
</evidence>
<evidence type="ECO:0000255" key="10">
    <source>
        <dbReference type="PROSITE-ProRule" id="PRU00275"/>
    </source>
</evidence>
<evidence type="ECO:0000255" key="11">
    <source>
        <dbReference type="PROSITE-ProRule" id="PRU00405"/>
    </source>
</evidence>
<evidence type="ECO:0000255" key="12">
    <source>
        <dbReference type="PROSITE-ProRule" id="PRU00408"/>
    </source>
</evidence>
<evidence type="ECO:0000255" key="13">
    <source>
        <dbReference type="PROSITE-ProRule" id="PRU00450"/>
    </source>
</evidence>
<evidence type="ECO:0000255" key="14">
    <source>
        <dbReference type="PROSITE-ProRule" id="PRU00457"/>
    </source>
</evidence>
<evidence type="ECO:0000255" key="15">
    <source>
        <dbReference type="PROSITE-ProRule" id="PRU00506"/>
    </source>
</evidence>
<evidence type="ECO:0000255" key="16">
    <source>
        <dbReference type="PROSITE-ProRule" id="PRU10094"/>
    </source>
</evidence>
<evidence type="ECO:0000256" key="17">
    <source>
        <dbReference type="SAM" id="MobiDB-lite"/>
    </source>
</evidence>
<evidence type="ECO:0000305" key="18"/>
<keyword id="KW-1073">Activation of host caspases by virus</keyword>
<keyword id="KW-0014">AIDS</keyword>
<keyword id="KW-0064">Aspartyl protease</keyword>
<keyword id="KW-0167">Capsid protein</keyword>
<keyword id="KW-0229">DNA integration</keyword>
<keyword id="KW-0233">DNA recombination</keyword>
<keyword id="KW-0238">DNA-binding</keyword>
<keyword id="KW-0239">DNA-directed DNA polymerase</keyword>
<keyword id="KW-0255">Endonuclease</keyword>
<keyword id="KW-1262">Eukaryotic host gene expression shutoff by virus</keyword>
<keyword id="KW-1193">Eukaryotic host translation shutoff by virus</keyword>
<keyword id="KW-1032">Host cell membrane</keyword>
<keyword id="KW-1035">Host cytoplasm</keyword>
<keyword id="KW-1039">Host endosome</keyword>
<keyword id="KW-1190">Host gene expression shutoff by virus</keyword>
<keyword id="KW-1043">Host membrane</keyword>
<keyword id="KW-1048">Host nucleus</keyword>
<keyword id="KW-0945">Host-virus interaction</keyword>
<keyword id="KW-0378">Hydrolase</keyword>
<keyword id="KW-0446">Lipid-binding</keyword>
<keyword id="KW-0449">Lipoprotein</keyword>
<keyword id="KW-0460">Magnesium</keyword>
<keyword id="KW-0472">Membrane</keyword>
<keyword id="KW-0479">Metal-binding</keyword>
<keyword id="KW-1119">Modulation of host cell apoptosis by virus</keyword>
<keyword id="KW-0511">Multifunctional enzyme</keyword>
<keyword id="KW-0519">Myristate</keyword>
<keyword id="KW-0540">Nuclease</keyword>
<keyword id="KW-0548">Nucleotidyltransferase</keyword>
<keyword id="KW-0597">Phosphoprotein</keyword>
<keyword id="KW-0645">Protease</keyword>
<keyword id="KW-0677">Repeat</keyword>
<keyword id="KW-0688">Ribosomal frameshifting</keyword>
<keyword id="KW-0694">RNA-binding</keyword>
<keyword id="KW-0695">RNA-directed DNA polymerase</keyword>
<keyword id="KW-0808">Transferase</keyword>
<keyword id="KW-1179">Viral genome integration</keyword>
<keyword id="KW-0543">Viral nucleoprotein</keyword>
<keyword id="KW-1163">Viral penetration into host nucleus</keyword>
<keyword id="KW-1188">Viral release from host cell</keyword>
<keyword id="KW-0946">Virion</keyword>
<keyword id="KW-0917">Virion maturation</keyword>
<keyword id="KW-1160">Virus entry into host cell</keyword>
<keyword id="KW-0862">Zinc</keyword>
<keyword id="KW-0863">Zinc-finger</keyword>
<protein>
    <recommendedName>
        <fullName>Gag-Pol polyprotein</fullName>
    </recommendedName>
    <alternativeName>
        <fullName>Pr160Gag-Pol</fullName>
    </alternativeName>
    <component>
        <recommendedName>
            <fullName>Matrix protein p17</fullName>
            <shortName>MA</shortName>
        </recommendedName>
    </component>
    <component>
        <recommendedName>
            <fullName>Capsid protein p24</fullName>
            <shortName>CA</shortName>
        </recommendedName>
    </component>
    <component>
        <recommendedName>
            <fullName evidence="7">Spacer peptide 1</fullName>
            <shortName>SP1</shortName>
        </recommendedName>
        <alternativeName>
            <fullName>p2</fullName>
        </alternativeName>
    </component>
    <component>
        <recommendedName>
            <fullName>Nucleocapsid protein p7</fullName>
            <shortName>NC</shortName>
        </recommendedName>
    </component>
    <component>
        <recommendedName>
            <fullName>Transframe peptide</fullName>
            <shortName>TF</shortName>
        </recommendedName>
    </component>
    <component>
        <recommendedName>
            <fullName>p6-pol</fullName>
            <shortName>p6*</shortName>
        </recommendedName>
    </component>
    <component>
        <recommendedName>
            <fullName>Protease</fullName>
            <ecNumber>3.4.23.16</ecNumber>
        </recommendedName>
        <alternativeName>
            <fullName>PR</fullName>
        </alternativeName>
        <alternativeName>
            <fullName>Retropepsin</fullName>
        </alternativeName>
    </component>
    <component>
        <recommendedName>
            <fullName>Reverse transcriptase/ribonuclease H</fullName>
            <ecNumber>2.7.7.49</ecNumber>
            <ecNumber>2.7.7.7</ecNumber>
            <ecNumber>3.1.26.13</ecNumber>
        </recommendedName>
        <alternativeName>
            <fullName>Exoribonuclease H</fullName>
            <ecNumber>3.1.13.2</ecNumber>
        </alternativeName>
        <alternativeName>
            <fullName>p66 RT</fullName>
        </alternativeName>
    </component>
    <component>
        <recommendedName>
            <fullName>p51 RT</fullName>
        </recommendedName>
    </component>
    <component>
        <recommendedName>
            <fullName>p15</fullName>
        </recommendedName>
    </component>
    <component>
        <recommendedName>
            <fullName>Integrase</fullName>
            <shortName>IN</shortName>
            <ecNumber evidence="5">2.7.7.-</ecNumber>
            <ecNumber evidence="5">3.1.-.-</ecNumber>
        </recommendedName>
    </component>
</protein>
<accession>O89940</accession>
<sequence length="1433" mass="161650">MGARASVLTGGKLDAWEKIRLRPGGRKSYKIKHLVWASRELERFALNPDLLETAEGCQQIMRQLQPSLQTGTEEIKSLYNAVATLYCVHQRIEVKDTKEALEEVEKIQKKSQEKIQQAAMDKGNSNQVSQNYPIVQNAQGQMVHQAITPRTLNAWVKVVEEKAFSPEVIPMFSALSEGATPQDLNLMLNTVGGHQAAMQMLKDTINEEAAEWDRMHPQQAGPFPPGQIREPRGSDIAGTTSSLQEQITWMTGNPPIPVGEIYKRWIILGLNKIVRMYSPVSILDIRQGPKEPFRDYVDRFFKCLRAEQASQDVKGWMTDTLLVQNANPDCKTILRALGQGASLEEMMTACQGVGGPSHKARVLAEAMSQASGAAAAIMMQRSNFKGPRRTIKCFNCGKEGHLARNCRAPRKKGCWKCGKEGHQMKDCTERQANFFRENLAFQQGEAREFSSEQDRTNSPTCRKPRVRRGDSPLPEAGDEGKGAISLPQITLWQRPLVTVKIGGQLIEALLDTGADDTVLEEINLPGRWKPKMIGGIGGFIKVRQYDQVPIEISGKKAIGTILVGPTPINIIGRNMLTQIGCTLNFPISPIETVPVKLKPGMDGPRVKQWPLTEEKIKALTEICKEMEEEGKISKIGPENPYNTPIFAIKKKDSTKWRKLVDFRELNKRTQDFWEVQLGIPHPAGLKKKKSVTVLDVGDAYFSVPLDEDFRKYTAFTIPSINNETPGVRYQYNVLPQGWKGSPAIFQSSMTRILEPFRANNPEMVIYQYMDDLYVGSDLEIGQHRAKIEELREHLLKWGFTTPDKKHQKEPPFLWMGYELHPDKWTVQPIQLPDKESWTVNDIQKLVGKLNWASQIYPGIKVTHLCKLLRGAKALTDIVSLTAEAEMELAENREILREPVHGVYYDPSKELIAEVQKQGLDQWTYQIYQEPYKNLKTGKYAKRGSAHTNDVKQLTEVVQKIATESIVIWGKTPKFKLPIRKETWEIWWTDYWQATWIPEWEFVNTPPLVKLWYRLETEPIPGAETYYVDGAANRETKLGKAGYVTDKGKQKIITLTETTNQKAELQAIQLALQDSRSEVNIVTDSQYALGIIQAQPDRSEAELVNQIIEQLIKKEKVYLSWVPAHKGIGGNEQVDKLVSSGIRKVLFLDGIDKAQEEHERYHNNWRAMASDFNLPPIVAKEIVASCDKCQLKGEAMHGQVDCSPGIWQLDCTHLEGKIIIVAVHVASGYIEAEVIPAETGQETAYFILKLAGRWPVTVIHTDNGSNFTSAAVKAACWWANITQEFGIPYNPQSQGVVESMNKELKKIIGQVRDQAEHLKTAVQMAVFIHNFKRKGGIGGYSAGERIIDIIASDIQTKELQKQITKIQNFRVYYRDSRDPVWKGPAKLLWKGEGAVVIQDNNEIKVVPRRKAKIIRDYGKQMAGDDCVAGRQDED</sequence>
<organism>
    <name type="scientific">Human immunodeficiency virus type 1 group M subtype G (isolate SE6165)</name>
    <name type="common">HIV-1</name>
    <dbReference type="NCBI Taxonomy" id="388824"/>
    <lineage>
        <taxon>Viruses</taxon>
        <taxon>Riboviria</taxon>
        <taxon>Pararnavirae</taxon>
        <taxon>Artverviricota</taxon>
        <taxon>Revtraviricetes</taxon>
        <taxon>Ortervirales</taxon>
        <taxon>Retroviridae</taxon>
        <taxon>Orthoretrovirinae</taxon>
        <taxon>Lentivirus</taxon>
        <taxon>Human immunodeficiency virus type 1</taxon>
    </lineage>
</organism>
<feature type="initiator methionine" description="Removed; by host" evidence="1">
    <location>
        <position position="1"/>
    </location>
</feature>
<feature type="chain" id="PRO_0000261279" description="Gag-Pol polyprotein">
    <location>
        <begin position="2"/>
        <end position="1433"/>
    </location>
</feature>
<feature type="chain" id="PRO_0000246536" description="Matrix protein p17" evidence="1">
    <location>
        <begin position="2"/>
        <end position="132"/>
    </location>
</feature>
<feature type="chain" id="PRO_0000246537" description="Capsid protein p24" evidence="1">
    <location>
        <begin position="133"/>
        <end position="363"/>
    </location>
</feature>
<feature type="peptide" id="PRO_0000246538" description="Spacer peptide 1" evidence="1">
    <location>
        <begin position="364"/>
        <end position="378"/>
    </location>
</feature>
<feature type="chain" id="PRO_0000246539" description="Nucleocapsid protein p7" evidence="1">
    <location>
        <begin position="379"/>
        <end position="433"/>
    </location>
</feature>
<feature type="peptide" id="PRO_0000246729" description="Transframe peptide" evidence="8">
    <location>
        <begin position="434"/>
        <end position="441"/>
    </location>
</feature>
<feature type="chain" id="PRO_0000246540" description="p6-pol" evidence="8">
    <location>
        <begin position="442"/>
        <end position="486"/>
    </location>
</feature>
<feature type="chain" id="PRO_0000246541" description="Protease" evidence="1">
    <location>
        <begin position="487"/>
        <end position="585"/>
    </location>
</feature>
<feature type="chain" id="PRO_0000246542" description="Reverse transcriptase/ribonuclease H" evidence="1">
    <location>
        <begin position="586"/>
        <end position="1145"/>
    </location>
</feature>
<feature type="chain" id="PRO_0000246543" description="p51 RT" evidence="1">
    <location>
        <begin position="586"/>
        <end position="1025"/>
    </location>
</feature>
<feature type="chain" id="PRO_0000246544" description="p15" evidence="1">
    <location>
        <begin position="1026"/>
        <end position="1145"/>
    </location>
</feature>
<feature type="chain" id="PRO_0000246545" description="Integrase" evidence="1">
    <location>
        <begin position="1146"/>
        <end position="1433"/>
    </location>
</feature>
<feature type="domain" description="Peptidase A2" evidence="10">
    <location>
        <begin position="506"/>
        <end position="575"/>
    </location>
</feature>
<feature type="domain" description="Reverse transcriptase" evidence="11">
    <location>
        <begin position="629"/>
        <end position="819"/>
    </location>
</feature>
<feature type="domain" description="RNase H type-1" evidence="12">
    <location>
        <begin position="1019"/>
        <end position="1142"/>
    </location>
</feature>
<feature type="domain" description="Integrase catalytic" evidence="14">
    <location>
        <begin position="1199"/>
        <end position="1349"/>
    </location>
</feature>
<feature type="zinc finger region" description="CCHC-type 1" evidence="9">
    <location>
        <begin position="391"/>
        <end position="408"/>
    </location>
</feature>
<feature type="zinc finger region" description="CCHC-type 2" evidence="9">
    <location>
        <begin position="412"/>
        <end position="429"/>
    </location>
</feature>
<feature type="zinc finger region" description="Integrase-type" evidence="13">
    <location>
        <begin position="1148"/>
        <end position="1189"/>
    </location>
</feature>
<feature type="DNA-binding region" description="Integrase-type" evidence="15">
    <location>
        <begin position="1368"/>
        <end position="1415"/>
    </location>
</feature>
<feature type="region of interest" description="Interaction with Gp41" evidence="7">
    <location>
        <begin position="7"/>
        <end position="31"/>
    </location>
</feature>
<feature type="region of interest" description="Interaction with host CALM1" evidence="5">
    <location>
        <begin position="8"/>
        <end position="43"/>
    </location>
</feature>
<feature type="region of interest" description="Interaction with host AP3D1" evidence="7">
    <location>
        <begin position="12"/>
        <end position="19"/>
    </location>
</feature>
<feature type="region of interest" description="Interaction with membrane phosphatidylinositol 4,5-bisphosphate and RNA" evidence="7">
    <location>
        <begin position="14"/>
        <end position="33"/>
    </location>
</feature>
<feature type="region of interest" description="Interaction with membrane phosphatidylinositol 4,5-bisphosphate" evidence="7">
    <location>
        <begin position="73"/>
        <end position="77"/>
    </location>
</feature>
<feature type="region of interest" description="Interaction with human PPIA/CYPA and NUP153" evidence="7">
    <location>
        <begin position="189"/>
        <end position="227"/>
    </location>
</feature>
<feature type="region of interest" description="Dimerization/Multimerization of capsid protein p24" evidence="5">
    <location>
        <begin position="277"/>
        <end position="363"/>
    </location>
</feature>
<feature type="region of interest" description="Disordered" evidence="17">
    <location>
        <begin position="445"/>
        <end position="481"/>
    </location>
</feature>
<feature type="region of interest" description="Dimerization of protease" evidence="5">
    <location>
        <begin position="487"/>
        <end position="491"/>
    </location>
</feature>
<feature type="region of interest" description="Dimerization of protease" evidence="5">
    <location>
        <begin position="535"/>
        <end position="541"/>
    </location>
</feature>
<feature type="region of interest" description="Dimerization of protease" evidence="5">
    <location>
        <begin position="574"/>
        <end position="586"/>
    </location>
</feature>
<feature type="region of interest" description="RT 'primer grip'" evidence="1">
    <location>
        <begin position="812"/>
        <end position="820"/>
    </location>
</feature>
<feature type="short sequence motif" description="Nuclear export signal" evidence="1">
    <location>
        <begin position="16"/>
        <end position="22"/>
    </location>
</feature>
<feature type="short sequence motif" description="Nuclear localization signal" evidence="1">
    <location>
        <begin position="26"/>
        <end position="32"/>
    </location>
</feature>
<feature type="short sequence motif" description="Tryptophan repeat motif" evidence="1">
    <location>
        <begin position="983"/>
        <end position="999"/>
    </location>
</feature>
<feature type="compositionally biased region" description="Basic and acidic residues" evidence="17">
    <location>
        <begin position="445"/>
        <end position="455"/>
    </location>
</feature>
<feature type="active site" description="For protease activity; shared with dimeric partner" evidence="16">
    <location>
        <position position="511"/>
    </location>
</feature>
<feature type="binding site" evidence="1">
    <location>
        <position position="695"/>
    </location>
    <ligand>
        <name>Mg(2+)</name>
        <dbReference type="ChEBI" id="CHEBI:18420"/>
        <label>1</label>
        <note>catalytic; for reverse transcriptase activity</note>
    </ligand>
</feature>
<feature type="binding site" evidence="1">
    <location>
        <position position="770"/>
    </location>
    <ligand>
        <name>Mg(2+)</name>
        <dbReference type="ChEBI" id="CHEBI:18420"/>
        <label>1</label>
        <note>catalytic; for reverse transcriptase activity</note>
    </ligand>
</feature>
<feature type="binding site" evidence="1">
    <location>
        <position position="771"/>
    </location>
    <ligand>
        <name>Mg(2+)</name>
        <dbReference type="ChEBI" id="CHEBI:18420"/>
        <label>1</label>
        <note>catalytic; for reverse transcriptase activity</note>
    </ligand>
</feature>
<feature type="binding site" evidence="1">
    <location>
        <position position="1028"/>
    </location>
    <ligand>
        <name>Mg(2+)</name>
        <dbReference type="ChEBI" id="CHEBI:18420"/>
        <label>2</label>
        <note>catalytic; for RNase H activity</note>
    </ligand>
</feature>
<feature type="binding site" evidence="1">
    <location>
        <position position="1063"/>
    </location>
    <ligand>
        <name>Mg(2+)</name>
        <dbReference type="ChEBI" id="CHEBI:18420"/>
        <label>2</label>
        <note>catalytic; for RNase H activity</note>
    </ligand>
</feature>
<feature type="binding site" evidence="1">
    <location>
        <position position="1083"/>
    </location>
    <ligand>
        <name>Mg(2+)</name>
        <dbReference type="ChEBI" id="CHEBI:18420"/>
        <label>2</label>
        <note>catalytic; for RNase H activity</note>
    </ligand>
</feature>
<feature type="binding site" evidence="1">
    <location>
        <position position="1134"/>
    </location>
    <ligand>
        <name>Mg(2+)</name>
        <dbReference type="ChEBI" id="CHEBI:18420"/>
        <label>2</label>
        <note>catalytic; for RNase H activity</note>
    </ligand>
</feature>
<feature type="binding site" evidence="13">
    <location>
        <position position="1157"/>
    </location>
    <ligand>
        <name>Zn(2+)</name>
        <dbReference type="ChEBI" id="CHEBI:29105"/>
    </ligand>
</feature>
<feature type="binding site" evidence="13">
    <location>
        <position position="1161"/>
    </location>
    <ligand>
        <name>Zn(2+)</name>
        <dbReference type="ChEBI" id="CHEBI:29105"/>
    </ligand>
</feature>
<feature type="binding site" evidence="13">
    <location>
        <position position="1185"/>
    </location>
    <ligand>
        <name>Zn(2+)</name>
        <dbReference type="ChEBI" id="CHEBI:29105"/>
    </ligand>
</feature>
<feature type="binding site" evidence="13">
    <location>
        <position position="1188"/>
    </location>
    <ligand>
        <name>Zn(2+)</name>
        <dbReference type="ChEBI" id="CHEBI:29105"/>
    </ligand>
</feature>
<feature type="binding site" evidence="1">
    <location>
        <position position="1209"/>
    </location>
    <ligand>
        <name>Mg(2+)</name>
        <dbReference type="ChEBI" id="CHEBI:18420"/>
        <label>3</label>
        <note>catalytic; for integrase activity</note>
    </ligand>
</feature>
<feature type="binding site" evidence="1">
    <location>
        <position position="1261"/>
    </location>
    <ligand>
        <name>Mg(2+)</name>
        <dbReference type="ChEBI" id="CHEBI:18420"/>
        <label>3</label>
        <note>catalytic; for integrase activity</note>
    </ligand>
</feature>
<feature type="binding site" evidence="5">
    <location>
        <position position="1297"/>
    </location>
    <ligand>
        <name>Mg(2+)</name>
        <dbReference type="ChEBI" id="CHEBI:18420"/>
        <label>3</label>
        <note>catalytic; for integrase activity</note>
    </ligand>
</feature>
<feature type="site" description="Cleavage; by viral protease" evidence="1">
    <location>
        <begin position="132"/>
        <end position="133"/>
    </location>
</feature>
<feature type="site" description="Cis/trans isomerization of proline peptide bond; by human PPIA/CYPA" evidence="1">
    <location>
        <begin position="221"/>
        <end position="222"/>
    </location>
</feature>
<feature type="site" description="Cleavage; by viral protease" evidence="1">
    <location>
        <begin position="363"/>
        <end position="364"/>
    </location>
</feature>
<feature type="site" description="Cleavage; by viral protease" evidence="1">
    <location>
        <begin position="378"/>
        <end position="379"/>
    </location>
</feature>
<feature type="site" description="Cleavage; by viral protease" evidence="8">
    <location>
        <begin position="433"/>
        <end position="434"/>
    </location>
</feature>
<feature type="site" description="Cleavage; by viral protease" evidence="1">
    <location>
        <begin position="441"/>
        <end position="442"/>
    </location>
</feature>
<feature type="site" description="Cleavage; by viral protease" evidence="8">
    <location>
        <begin position="485" status="uncertain"/>
        <end position="486" status="uncertain"/>
    </location>
</feature>
<feature type="site" description="Cleavage; by viral protease" evidence="1">
    <location>
        <begin position="584"/>
        <end position="585"/>
    </location>
</feature>
<feature type="site" description="Essential for RT p66/p51 heterodimerization" evidence="1">
    <location>
        <position position="985"/>
    </location>
</feature>
<feature type="site" description="Essential for RT p66/p51 heterodimerization" evidence="1">
    <location>
        <position position="998"/>
    </location>
</feature>
<feature type="site" description="Cleavage; by viral protease; partial" evidence="8">
    <location>
        <begin position="1024" status="uncertain"/>
        <end position="1025" status="uncertain"/>
    </location>
</feature>
<feature type="site" description="Cleavage; by viral protease" evidence="1">
    <location>
        <begin position="1145"/>
        <end position="1146"/>
    </location>
</feature>
<feature type="modified residue" description="Phosphotyrosine; by host" evidence="1">
    <location>
        <position position="132"/>
    </location>
</feature>
<feature type="lipid moiety-binding region" description="N-myristoyl glycine; by host" evidence="1">
    <location>
        <position position="2"/>
    </location>
</feature>
<reference key="1">
    <citation type="journal article" date="1998" name="Virology">
        <title>Full genome sequences of human immunodeficiency virus type 1 subtypes G and A/G intersubtype recombinants.</title>
        <authorList>
            <person name="Carr J.K."/>
            <person name="Salminen M.O."/>
            <person name="Albert J."/>
            <person name="Sanders-Buell E."/>
            <person name="Gotte D."/>
            <person name="Birx D.L."/>
            <person name="McCutchan F.E."/>
        </authorList>
    </citation>
    <scope>NUCLEOTIDE SEQUENCE [GENOMIC DNA]</scope>
</reference>
<dbReference type="EC" id="3.4.23.16"/>
<dbReference type="EC" id="2.7.7.49"/>
<dbReference type="EC" id="2.7.7.7"/>
<dbReference type="EC" id="3.1.26.13"/>
<dbReference type="EC" id="3.1.13.2"/>
<dbReference type="EC" id="2.7.7.-" evidence="5"/>
<dbReference type="EC" id="3.1.-.-" evidence="5"/>
<dbReference type="EMBL" id="AF061642">
    <property type="protein sequence ID" value="AAC29060.1"/>
    <property type="status" value="ALT_SEQ"/>
    <property type="molecule type" value="Genomic_DNA"/>
</dbReference>
<dbReference type="BMRB" id="O89940"/>
<dbReference type="SMR" id="O89940"/>
<dbReference type="IntAct" id="O89940">
    <property type="interactions" value="1"/>
</dbReference>
<dbReference type="MEROPS" id="A02.001"/>
<dbReference type="PRO" id="PR:O89940"/>
<dbReference type="Proteomes" id="UP000135013">
    <property type="component" value="Segment"/>
</dbReference>
<dbReference type="GO" id="GO:0043657">
    <property type="term" value="C:host cell"/>
    <property type="evidence" value="ECO:0007669"/>
    <property type="project" value="GOC"/>
</dbReference>
<dbReference type="GO" id="GO:0042025">
    <property type="term" value="C:host cell nucleus"/>
    <property type="evidence" value="ECO:0007669"/>
    <property type="project" value="UniProtKB-SubCell"/>
</dbReference>
<dbReference type="GO" id="GO:0020002">
    <property type="term" value="C:host cell plasma membrane"/>
    <property type="evidence" value="ECO:0007669"/>
    <property type="project" value="UniProtKB-SubCell"/>
</dbReference>
<dbReference type="GO" id="GO:0072494">
    <property type="term" value="C:host multivesicular body"/>
    <property type="evidence" value="ECO:0007669"/>
    <property type="project" value="UniProtKB-SubCell"/>
</dbReference>
<dbReference type="GO" id="GO:0016020">
    <property type="term" value="C:membrane"/>
    <property type="evidence" value="ECO:0007669"/>
    <property type="project" value="UniProtKB-KW"/>
</dbReference>
<dbReference type="GO" id="GO:0019013">
    <property type="term" value="C:viral nucleocapsid"/>
    <property type="evidence" value="ECO:0007669"/>
    <property type="project" value="UniProtKB-KW"/>
</dbReference>
<dbReference type="GO" id="GO:0055036">
    <property type="term" value="C:virion membrane"/>
    <property type="evidence" value="ECO:0007669"/>
    <property type="project" value="UniProtKB-SubCell"/>
</dbReference>
<dbReference type="GO" id="GO:0004190">
    <property type="term" value="F:aspartic-type endopeptidase activity"/>
    <property type="evidence" value="ECO:0007669"/>
    <property type="project" value="UniProtKB-KW"/>
</dbReference>
<dbReference type="GO" id="GO:0003677">
    <property type="term" value="F:DNA binding"/>
    <property type="evidence" value="ECO:0007669"/>
    <property type="project" value="UniProtKB-KW"/>
</dbReference>
<dbReference type="GO" id="GO:0003887">
    <property type="term" value="F:DNA-directed DNA polymerase activity"/>
    <property type="evidence" value="ECO:0007669"/>
    <property type="project" value="UniProtKB-KW"/>
</dbReference>
<dbReference type="GO" id="GO:0004533">
    <property type="term" value="F:exoribonuclease H activity"/>
    <property type="evidence" value="ECO:0007669"/>
    <property type="project" value="UniProtKB-EC"/>
</dbReference>
<dbReference type="GO" id="GO:0008289">
    <property type="term" value="F:lipid binding"/>
    <property type="evidence" value="ECO:0007669"/>
    <property type="project" value="UniProtKB-KW"/>
</dbReference>
<dbReference type="GO" id="GO:0035613">
    <property type="term" value="F:RNA stem-loop binding"/>
    <property type="evidence" value="ECO:0007669"/>
    <property type="project" value="TreeGrafter"/>
</dbReference>
<dbReference type="GO" id="GO:0003964">
    <property type="term" value="F:RNA-directed DNA polymerase activity"/>
    <property type="evidence" value="ECO:0007669"/>
    <property type="project" value="UniProtKB-KW"/>
</dbReference>
<dbReference type="GO" id="GO:0004523">
    <property type="term" value="F:RNA-DNA hybrid ribonuclease activity"/>
    <property type="evidence" value="ECO:0007669"/>
    <property type="project" value="InterPro"/>
</dbReference>
<dbReference type="GO" id="GO:0005198">
    <property type="term" value="F:structural molecule activity"/>
    <property type="evidence" value="ECO:0007669"/>
    <property type="project" value="InterPro"/>
</dbReference>
<dbReference type="GO" id="GO:0008270">
    <property type="term" value="F:zinc ion binding"/>
    <property type="evidence" value="ECO:0007669"/>
    <property type="project" value="UniProtKB-KW"/>
</dbReference>
<dbReference type="GO" id="GO:0015074">
    <property type="term" value="P:DNA integration"/>
    <property type="evidence" value="ECO:0007669"/>
    <property type="project" value="UniProtKB-KW"/>
</dbReference>
<dbReference type="GO" id="GO:0006310">
    <property type="term" value="P:DNA recombination"/>
    <property type="evidence" value="ECO:0007669"/>
    <property type="project" value="UniProtKB-KW"/>
</dbReference>
<dbReference type="GO" id="GO:0075713">
    <property type="term" value="P:establishment of integrated proviral latency"/>
    <property type="evidence" value="ECO:0007669"/>
    <property type="project" value="UniProtKB-KW"/>
</dbReference>
<dbReference type="GO" id="GO:0006508">
    <property type="term" value="P:proteolysis"/>
    <property type="evidence" value="ECO:0007669"/>
    <property type="project" value="UniProtKB-KW"/>
</dbReference>
<dbReference type="GO" id="GO:0046718">
    <property type="term" value="P:symbiont entry into host cell"/>
    <property type="evidence" value="ECO:0007669"/>
    <property type="project" value="UniProtKB-KW"/>
</dbReference>
<dbReference type="GO" id="GO:0052151">
    <property type="term" value="P:symbiont-mediated activation of host apoptosis"/>
    <property type="evidence" value="ECO:0007669"/>
    <property type="project" value="UniProtKB-KW"/>
</dbReference>
<dbReference type="GO" id="GO:0039657">
    <property type="term" value="P:symbiont-mediated suppression of host gene expression"/>
    <property type="evidence" value="ECO:0007669"/>
    <property type="project" value="UniProtKB-KW"/>
</dbReference>
<dbReference type="GO" id="GO:0044826">
    <property type="term" value="P:viral genome integration into host DNA"/>
    <property type="evidence" value="ECO:0007669"/>
    <property type="project" value="UniProtKB-KW"/>
</dbReference>
<dbReference type="GO" id="GO:0075732">
    <property type="term" value="P:viral penetration into host nucleus"/>
    <property type="evidence" value="ECO:0007669"/>
    <property type="project" value="UniProtKB-KW"/>
</dbReference>
<dbReference type="GO" id="GO:0075523">
    <property type="term" value="P:viral translational frameshifting"/>
    <property type="evidence" value="ECO:0007669"/>
    <property type="project" value="UniProtKB-KW"/>
</dbReference>
<dbReference type="CDD" id="cd05482">
    <property type="entry name" value="HIV_retropepsin_like"/>
    <property type="match status" value="1"/>
</dbReference>
<dbReference type="CDD" id="cd01645">
    <property type="entry name" value="RT_Rtv"/>
    <property type="match status" value="1"/>
</dbReference>
<dbReference type="FunFam" id="1.10.375.10:FF:000001">
    <property type="entry name" value="Gag polyprotein"/>
    <property type="match status" value="1"/>
</dbReference>
<dbReference type="FunFam" id="4.10.60.10:FF:000001">
    <property type="entry name" value="Gag polyprotein"/>
    <property type="match status" value="1"/>
</dbReference>
<dbReference type="FunFam" id="3.30.70.270:FF:000006">
    <property type="entry name" value="Gag-Pol polyprotein"/>
    <property type="match status" value="1"/>
</dbReference>
<dbReference type="FunFam" id="3.30.420.10:FF:000017">
    <property type="entry name" value="POL polyprotein"/>
    <property type="match status" value="1"/>
</dbReference>
<dbReference type="Gene3D" id="1.10.10.200">
    <property type="match status" value="1"/>
</dbReference>
<dbReference type="Gene3D" id="1.10.1200.30">
    <property type="match status" value="1"/>
</dbReference>
<dbReference type="Gene3D" id="3.30.70.270">
    <property type="match status" value="3"/>
</dbReference>
<dbReference type="Gene3D" id="2.40.70.10">
    <property type="entry name" value="Acid Proteases"/>
    <property type="match status" value="1"/>
</dbReference>
<dbReference type="Gene3D" id="3.10.10.10">
    <property type="entry name" value="HIV Type 1 Reverse Transcriptase, subunit A, domain 1"/>
    <property type="match status" value="1"/>
</dbReference>
<dbReference type="Gene3D" id="1.10.375.10">
    <property type="entry name" value="Human Immunodeficiency Virus Type 1 Capsid Protein"/>
    <property type="match status" value="1"/>
</dbReference>
<dbReference type="Gene3D" id="1.10.150.90">
    <property type="entry name" value="Immunodeficiency lentiviruses, gag gene matrix protein p17"/>
    <property type="match status" value="1"/>
</dbReference>
<dbReference type="Gene3D" id="2.30.30.10">
    <property type="entry name" value="Integrase, C-terminal domain superfamily, retroviral"/>
    <property type="match status" value="1"/>
</dbReference>
<dbReference type="Gene3D" id="3.30.420.10">
    <property type="entry name" value="Ribonuclease H-like superfamily/Ribonuclease H"/>
    <property type="match status" value="2"/>
</dbReference>
<dbReference type="Gene3D" id="1.20.5.760">
    <property type="entry name" value="Single helix bin"/>
    <property type="match status" value="1"/>
</dbReference>
<dbReference type="Gene3D" id="4.10.60.10">
    <property type="entry name" value="Zinc finger, CCHC-type"/>
    <property type="match status" value="1"/>
</dbReference>
<dbReference type="InterPro" id="IPR001969">
    <property type="entry name" value="Aspartic_peptidase_AS"/>
</dbReference>
<dbReference type="InterPro" id="IPR043502">
    <property type="entry name" value="DNA/RNA_pol_sf"/>
</dbReference>
<dbReference type="InterPro" id="IPR045345">
    <property type="entry name" value="Gag_p24_C"/>
</dbReference>
<dbReference type="InterPro" id="IPR017856">
    <property type="entry name" value="Integrase-like_N"/>
</dbReference>
<dbReference type="InterPro" id="IPR036862">
    <property type="entry name" value="Integrase_C_dom_sf_retrovir"/>
</dbReference>
<dbReference type="InterPro" id="IPR001037">
    <property type="entry name" value="Integrase_C_retrovir"/>
</dbReference>
<dbReference type="InterPro" id="IPR001584">
    <property type="entry name" value="Integrase_cat-core"/>
</dbReference>
<dbReference type="InterPro" id="IPR003308">
    <property type="entry name" value="Integrase_Zn-bd_dom_N"/>
</dbReference>
<dbReference type="InterPro" id="IPR000071">
    <property type="entry name" value="Lentvrl_matrix_N"/>
</dbReference>
<dbReference type="InterPro" id="IPR012344">
    <property type="entry name" value="Matrix_HIV/RSV_N"/>
</dbReference>
<dbReference type="InterPro" id="IPR001995">
    <property type="entry name" value="Peptidase_A2_cat"/>
</dbReference>
<dbReference type="InterPro" id="IPR021109">
    <property type="entry name" value="Peptidase_aspartic_dom_sf"/>
</dbReference>
<dbReference type="InterPro" id="IPR034170">
    <property type="entry name" value="Retropepsin-like_cat_dom"/>
</dbReference>
<dbReference type="InterPro" id="IPR018061">
    <property type="entry name" value="Retropepsins"/>
</dbReference>
<dbReference type="InterPro" id="IPR008916">
    <property type="entry name" value="Retrov_capsid_C"/>
</dbReference>
<dbReference type="InterPro" id="IPR008919">
    <property type="entry name" value="Retrov_capsid_N"/>
</dbReference>
<dbReference type="InterPro" id="IPR010999">
    <property type="entry name" value="Retrovr_matrix"/>
</dbReference>
<dbReference type="InterPro" id="IPR043128">
    <property type="entry name" value="Rev_trsase/Diguanyl_cyclase"/>
</dbReference>
<dbReference type="InterPro" id="IPR012337">
    <property type="entry name" value="RNaseH-like_sf"/>
</dbReference>
<dbReference type="InterPro" id="IPR002156">
    <property type="entry name" value="RNaseH_domain"/>
</dbReference>
<dbReference type="InterPro" id="IPR036397">
    <property type="entry name" value="RNaseH_sf"/>
</dbReference>
<dbReference type="InterPro" id="IPR000477">
    <property type="entry name" value="RT_dom"/>
</dbReference>
<dbReference type="InterPro" id="IPR010659">
    <property type="entry name" value="RVT_connect"/>
</dbReference>
<dbReference type="InterPro" id="IPR010661">
    <property type="entry name" value="RVT_thumb"/>
</dbReference>
<dbReference type="InterPro" id="IPR001878">
    <property type="entry name" value="Znf_CCHC"/>
</dbReference>
<dbReference type="InterPro" id="IPR036875">
    <property type="entry name" value="Znf_CCHC_sf"/>
</dbReference>
<dbReference type="PANTHER" id="PTHR41694">
    <property type="entry name" value="ENDOGENOUS RETROVIRUS GROUP K MEMBER POL PROTEIN"/>
    <property type="match status" value="1"/>
</dbReference>
<dbReference type="PANTHER" id="PTHR41694:SF3">
    <property type="entry name" value="RNA-DIRECTED DNA POLYMERASE-RELATED"/>
    <property type="match status" value="1"/>
</dbReference>
<dbReference type="Pfam" id="PF00540">
    <property type="entry name" value="Gag_p17"/>
    <property type="match status" value="1"/>
</dbReference>
<dbReference type="Pfam" id="PF19317">
    <property type="entry name" value="Gag_p24_C"/>
    <property type="match status" value="1"/>
</dbReference>
<dbReference type="Pfam" id="PF00552">
    <property type="entry name" value="IN_DBD_C"/>
    <property type="match status" value="1"/>
</dbReference>
<dbReference type="Pfam" id="PF02022">
    <property type="entry name" value="Integrase_Zn"/>
    <property type="match status" value="1"/>
</dbReference>
<dbReference type="Pfam" id="PF00075">
    <property type="entry name" value="RNase_H"/>
    <property type="match status" value="1"/>
</dbReference>
<dbReference type="Pfam" id="PF00665">
    <property type="entry name" value="rve"/>
    <property type="match status" value="1"/>
</dbReference>
<dbReference type="Pfam" id="PF00077">
    <property type="entry name" value="RVP"/>
    <property type="match status" value="1"/>
</dbReference>
<dbReference type="Pfam" id="PF00078">
    <property type="entry name" value="RVT_1"/>
    <property type="match status" value="1"/>
</dbReference>
<dbReference type="Pfam" id="PF06815">
    <property type="entry name" value="RVT_connect"/>
    <property type="match status" value="1"/>
</dbReference>
<dbReference type="Pfam" id="PF06817">
    <property type="entry name" value="RVT_thumb"/>
    <property type="match status" value="1"/>
</dbReference>
<dbReference type="Pfam" id="PF00098">
    <property type="entry name" value="zf-CCHC"/>
    <property type="match status" value="2"/>
</dbReference>
<dbReference type="PRINTS" id="PR00234">
    <property type="entry name" value="HIV1MATRIX"/>
</dbReference>
<dbReference type="SMART" id="SM00343">
    <property type="entry name" value="ZnF_C2HC"/>
    <property type="match status" value="2"/>
</dbReference>
<dbReference type="SUPFAM" id="SSF50630">
    <property type="entry name" value="Acid proteases"/>
    <property type="match status" value="1"/>
</dbReference>
<dbReference type="SUPFAM" id="SSF50122">
    <property type="entry name" value="DNA-binding domain of retroviral integrase"/>
    <property type="match status" value="1"/>
</dbReference>
<dbReference type="SUPFAM" id="SSF56672">
    <property type="entry name" value="DNA/RNA polymerases"/>
    <property type="match status" value="1"/>
</dbReference>
<dbReference type="SUPFAM" id="SSF46919">
    <property type="entry name" value="N-terminal Zn binding domain of HIV integrase"/>
    <property type="match status" value="1"/>
</dbReference>
<dbReference type="SUPFAM" id="SSF47836">
    <property type="entry name" value="Retroviral matrix proteins"/>
    <property type="match status" value="1"/>
</dbReference>
<dbReference type="SUPFAM" id="SSF47353">
    <property type="entry name" value="Retrovirus capsid dimerization domain-like"/>
    <property type="match status" value="1"/>
</dbReference>
<dbReference type="SUPFAM" id="SSF47943">
    <property type="entry name" value="Retrovirus capsid protein, N-terminal core domain"/>
    <property type="match status" value="1"/>
</dbReference>
<dbReference type="SUPFAM" id="SSF57756">
    <property type="entry name" value="Retrovirus zinc finger-like domains"/>
    <property type="match status" value="1"/>
</dbReference>
<dbReference type="SUPFAM" id="SSF53098">
    <property type="entry name" value="Ribonuclease H-like"/>
    <property type="match status" value="2"/>
</dbReference>
<dbReference type="PROSITE" id="PS50175">
    <property type="entry name" value="ASP_PROT_RETROV"/>
    <property type="match status" value="1"/>
</dbReference>
<dbReference type="PROSITE" id="PS00141">
    <property type="entry name" value="ASP_PROTEASE"/>
    <property type="match status" value="1"/>
</dbReference>
<dbReference type="PROSITE" id="PS50994">
    <property type="entry name" value="INTEGRASE"/>
    <property type="match status" value="1"/>
</dbReference>
<dbReference type="PROSITE" id="PS51027">
    <property type="entry name" value="INTEGRASE_DBD"/>
    <property type="match status" value="1"/>
</dbReference>
<dbReference type="PROSITE" id="PS50879">
    <property type="entry name" value="RNASE_H_1"/>
    <property type="match status" value="1"/>
</dbReference>
<dbReference type="PROSITE" id="PS50878">
    <property type="entry name" value="RT_POL"/>
    <property type="match status" value="1"/>
</dbReference>
<dbReference type="PROSITE" id="PS50158">
    <property type="entry name" value="ZF_CCHC"/>
    <property type="match status" value="2"/>
</dbReference>
<dbReference type="PROSITE" id="PS50876">
    <property type="entry name" value="ZF_INTEGRASE"/>
    <property type="match status" value="1"/>
</dbReference>
<name>POL_HV1SE</name>
<gene>
    <name type="primary">gag-pol</name>
</gene>
<comment type="function">
    <molecule>Gag-Pol polyprotein</molecule>
    <text evidence="1">Mediates, with Gag polyprotein, the essential events in virion assembly, including binding the plasma membrane, making the protein-protein interactions necessary to create spherical particles, recruiting the viral Env proteins, and packaging the genomic RNA via direct interactions with the RNA packaging sequence (Psi). Gag-Pol polyprotein may regulate its own translation, by the binding genomic RNA in the 5'-UTR. At low concentration, the polyprotein would promote translation, whereas at high concentration, the polyprotein would encapsidate genomic RNA and then shut off translation.</text>
</comment>
<comment type="function">
    <molecule>Matrix protein p17</molecule>
    <text evidence="7">Targets the polyprotein to the plasma membrane via a multipartite membrane-binding signal, that includes its myristoylated N-terminus. Matrix protein is part of the pre-integration complex. Implicated in the release from host cell mediated by Vpu. Binds to RNA.</text>
</comment>
<comment type="function">
    <molecule>Capsid protein p24</molecule>
    <text evidence="5 7">Forms the conical core that encapsulates the genomic RNA-nucleocapsid complex in the virion. Most core are conical, with only 7% tubular. The core is constituted by capsid protein hexamer subunits. The core is disassembled soon after virion entry (By similarity). Host restriction factors such as TRIM5-alpha or TRIMCyp bind retroviral capsids and cause premature capsid disassembly, leading to blocks in reverse transcription. Capsid restriction by TRIM5 is one of the factors which restricts HIV-1 to the human species. Host PIN1 apparently facilitates the virion uncoating. On the other hand, interactions with PDZD8 or CYPA stabilize the capsid.</text>
</comment>
<comment type="function">
    <molecule>Nucleocapsid protein p7</molecule>
    <text evidence="5">Encapsulates and protects viral dimeric unspliced genomic RNA (gRNA). Binds these RNAs through its zinc fingers. Acts as a nucleic acid chaperone which is involved in rearangement of nucleic acid secondary structure during gRNA retrotranscription. Also facilitates template switch leading to recombination. As part of the polyprotein, participates in gRNA dimerization, packaging, tRNA incorporation and virion assembly.</text>
</comment>
<comment type="function">
    <molecule>Protease</molecule>
    <text evidence="5 10">Aspartyl protease that mediates proteolytic cleavages of Gag and Gag-Pol polyproteins during or shortly after the release of the virion from the plasma membrane. Cleavages take place as an ordered, step-wise cascade to yield mature proteins. This process is called maturation. Displays maximal activity during the budding process just prior to particle release from the cell. Also cleaves Nef and Vif, probably concomitantly with viral structural proteins on maturation of virus particles. Hydrolyzes host EIF4GI and PABP1 in order to shut off the capped cellular mRNA translation. The resulting inhibition of cellular protein synthesis serves to ensure maximal viral gene expression and to evade host immune response. Also mediates cleavage of host YTHDF3. Mediates cleavage of host CARD8, thereby activating the CARD8 inflammasome, leading to the clearance of latent HIV-1 in patient CD4(+) T-cells after viral reactivation; in contrast, HIV-1 can evade CARD8-sensing when its protease remains inactive in infected cells prior to viral budding (By similarity).</text>
</comment>
<comment type="function">
    <molecule>Reverse transcriptase/ribonuclease H</molecule>
    <text evidence="5">Multifunctional enzyme that converts the viral RNA genome into dsDNA in the cytoplasm, shortly after virus entry into the cell. This enzyme displays a DNA polymerase activity that can copy either DNA or RNA templates, and a ribonuclease H (RNase H) activity that cleaves the RNA strand of RNA-DNA heteroduplexes in a partially processive 3' to 5' endonucleasic mode. Conversion of viral genomic RNA into dsDNA requires many steps. A tRNA(3)-Lys binds to the primer-binding site (PBS) situated at the 5'-end of the viral RNA. RT uses the 3' end of the tRNA primer to perform a short round of RNA-dependent minus-strand DNA synthesis. The reading proceeds through the U5 region and ends after the repeated (R) region which is present at both ends of viral RNA. The portion of the RNA-DNA heteroduplex is digested by the RNase H, resulting in a ssDNA product attached to the tRNA primer. This ssDNA/tRNA hybridizes with the identical R region situated at the 3' end of viral RNA. This template exchange, known as minus-strand DNA strong stop transfer, can be either intra- or intermolecular. RT uses the 3' end of this newly synthesized short ssDNA to perform the RNA-dependent minus-strand DNA synthesis of the whole template. RNase H digests the RNA template except for two polypurine tracts (PPTs) situated at the 5'-end and near the center of the genome. It is not clear if both polymerase and RNase H activities are simultaneous. RNase H probably can proceed both in a polymerase-dependent (RNA cut into small fragments by the same RT performing DNA synthesis) and a polymerase-independent mode (cleavage of remaining RNA fragments by free RTs). Secondly, RT performs DNA-directed plus-strand DNA synthesis using the PPTs that have not been removed by RNase H as primers. PPTs and tRNA primers are then removed by RNase H. The 3' and 5' ssDNA PBS regions hybridize to form a circular dsDNA intermediate. Strand displacement synthesis by RT to the PBS and PPT ends produces a blunt ended, linear dsDNA copy of the viral genome that includes long terminal repeats (LTRs) at both ends.</text>
</comment>
<comment type="function">
    <molecule>Integrase</molecule>
    <text evidence="5">Catalyzes viral DNA integration into the host chromosome, by performing a series of DNA cutting and joining reactions. This enzyme activity takes place after virion entry into a cell and reverse transcription of the RNA genome in dsDNA. The first step in the integration process is 3' processing. This step requires a complex comprising the viral genome, matrix protein, Vpr and integrase. This complex is called the pre-integration complex (PIC). The integrase protein removes 2 nucleotides from each 3' end of the viral DNA, leaving recessed CA OH's at the 3' ends. In the second step, the PIC enters cell nucleus. This process is mediated through integrase and Vpr proteins, and allows the virus to infect a non dividing cell. This ability to enter the nucleus is specific of lentiviruses, other retroviruses cannot and rely on cell division to access cell chromosomes. In the third step, termed strand transfer, the integrase protein joins the previously processed 3' ends to the 5' ends of strands of target cellular DNA at the site of integration. The 5'-ends are produced by integrase-catalyzed staggered cuts, 5 bp apart. A Y-shaped, gapped, recombination intermediate results, with the 5'-ends of the viral DNA strands and the 3' ends of target DNA strands remaining unjoined, flanking a gap of 5 bp. The last step is viral DNA integration into host chromosome. This involves host DNA repair synthesis in which the 5 bp gaps between the unjoined strands are filled in and then ligated. Since this process occurs at both cuts flanking the HIV genome, a 5 bp duplication of host DNA is produced at the ends of HIV-1 integration. Alternatively, Integrase may catalyze the excision of viral DNA just after strand transfer, this is termed disintegration.</text>
</comment>
<comment type="catalytic activity">
    <reaction evidence="10">
        <text>Specific for a P1 residue that is hydrophobic, and P1' variable, but often Pro.</text>
        <dbReference type="EC" id="3.4.23.16"/>
    </reaction>
</comment>
<comment type="catalytic activity">
    <reaction evidence="1">
        <text>Endohydrolysis of RNA in RNA/DNA hybrids. Three different cleavage modes: 1. sequence-specific internal cleavage of RNA. Human immunodeficiency virus type 1 and Moloney murine leukemia virus enzymes prefer to cleave the RNA strand one nucleotide away from the RNA-DNA junction. 2. RNA 5'-end directed cleavage 13-19 nucleotides from the RNA end. 3. DNA 3'-end directed cleavage 15-20 nucleotides away from the primer terminus.</text>
        <dbReference type="EC" id="3.1.26.13"/>
    </reaction>
</comment>
<comment type="catalytic activity">
    <reaction evidence="1">
        <text>3'-end directed exonucleolytic cleavage of viral RNA-DNA hybrid.</text>
        <dbReference type="EC" id="3.1.13.2"/>
    </reaction>
</comment>
<comment type="catalytic activity">
    <reaction evidence="11">
        <text>DNA(n) + a 2'-deoxyribonucleoside 5'-triphosphate = DNA(n+1) + diphosphate</text>
        <dbReference type="Rhea" id="RHEA:22508"/>
        <dbReference type="Rhea" id="RHEA-COMP:17339"/>
        <dbReference type="Rhea" id="RHEA-COMP:17340"/>
        <dbReference type="ChEBI" id="CHEBI:33019"/>
        <dbReference type="ChEBI" id="CHEBI:61560"/>
        <dbReference type="ChEBI" id="CHEBI:173112"/>
        <dbReference type="EC" id="2.7.7.49"/>
    </reaction>
</comment>
<comment type="catalytic activity">
    <reaction evidence="11">
        <text>DNA(n) + a 2'-deoxyribonucleoside 5'-triphosphate = DNA(n+1) + diphosphate</text>
        <dbReference type="Rhea" id="RHEA:22508"/>
        <dbReference type="Rhea" id="RHEA-COMP:17339"/>
        <dbReference type="Rhea" id="RHEA-COMP:17340"/>
        <dbReference type="ChEBI" id="CHEBI:33019"/>
        <dbReference type="ChEBI" id="CHEBI:61560"/>
        <dbReference type="ChEBI" id="CHEBI:173112"/>
        <dbReference type="EC" id="2.7.7.7"/>
    </reaction>
</comment>
<comment type="cofactor">
    <cofactor evidence="1">
        <name>Mg(2+)</name>
        <dbReference type="ChEBI" id="CHEBI:18420"/>
    </cofactor>
    <text evidence="1">Binds 2 magnesium ions for reverse transcriptase polymerase activity.</text>
</comment>
<comment type="cofactor">
    <cofactor evidence="1">
        <name>Mg(2+)</name>
        <dbReference type="ChEBI" id="CHEBI:18420"/>
    </cofactor>
    <text evidence="1">Binds 2 magnesium ions for ribonuclease H (RNase H) activity. Substrate-binding is a precondition for magnesium binding.</text>
</comment>
<comment type="cofactor">
    <cofactor evidence="1">
        <name>Mg(2+)</name>
        <dbReference type="ChEBI" id="CHEBI:18420"/>
    </cofactor>
    <text evidence="1">Magnesium ions are required for integrase activity. Binds at least 1, maybe 2 magnesium ions.</text>
</comment>
<comment type="activity regulation">
    <text evidence="1">Protease: The viral protease is inhibited by many synthetic protease inhibitors (PIs), such as amprenavir, atazanavir, indinavir, loprinavir, nelfinavir, ritonavir and saquinavir. Use of protease inhibitors in tritherapy regimens permit more ambitious therapeutic strategies. Reverse transcriptase/ribonuclease H: RT can be inhibited either by nucleoside RT inhibitors (NRTIs) or by non nucleoside RT inhibitors (NNRTIs). NRTIs act as chain terminators, whereas NNRTIs inhibit DNA polymerization by binding a small hydrophobic pocket near the RT active site and inducing an allosteric change in this region. Classical NRTIs are abacavir, adefovir (PMEA), didanosine (ddI), lamivudine (3TC), stavudine (d4T), tenofovir (PMPA), zalcitabine (ddC), and zidovudine (AZT). Classical NNRTIs are atevirdine (BHAP U-87201E), delavirdine, efavirenz (DMP-266), emivirine (I-EBU), and nevirapine (BI-RG-587). The tritherapies used as a basic effective treatment of AIDS associate two NRTIs and one NNRTI.</text>
</comment>
<comment type="subunit">
    <molecule>Matrix protein p17</molecule>
    <text evidence="5 7">Homotrimer; further assembles as hexamers of trimers (By similarity). Interacts with gp41 (via C-terminus) (By similarity). Interacts with host CALM1; this interaction induces a conformational change in the Matrix protein, triggering exposure of the myristate group (By similarity). Interacts with host AP3D1; this interaction allows the polyprotein trafficking to multivesicular bodies during virus assembly (By similarity). Part of the pre-integration complex (PIC) which is composed of viral genome, matrix protein, Vpr and integrase (By similarity).</text>
</comment>
<comment type="subunit">
    <molecule>Capsid protein p24</molecule>
    <text evidence="5 7">Homodimer; the homodimer further multimerizes as homohexamers or homopentamers. Interacts with human PPIA/CYPA (By similarity); This interaction stabilizes the capsid. Interacts with human NUP153 (By similarity). Interacts with host PDZD8; this interaction stabilizes the capsid (By similarity). Interacts with monkey TRIM5; this interaction destabilizes the capsid (By similarity).</text>
</comment>
<comment type="subunit">
    <molecule>Protease</molecule>
    <text evidence="5 7">Homodimer, whose active site consists of two apposed aspartic acid residues.</text>
</comment>
<comment type="subunit">
    <molecule>Reverse transcriptase/ribonuclease H</molecule>
    <text evidence="3">Heterodimer of p66 RT and p51 RT (RT p66/p51) (By similarity). Heterodimerization of RT is essential for DNA polymerase activity (By similarity). The overall folding of the subdomains is similar in p66 RT and p51 RT but the spatial arrangements of the subdomains are dramatically different (By similarity).</text>
</comment>
<comment type="subunit">
    <molecule>Integrase</molecule>
    <text evidence="4 5 7">Homotetramer; may further associate as a homohexadecamer (By similarity). Part of the pre-integration complex (PIC) which is composed of viral genome, matrix protein, Vpr and integrase. Interacts with human SMARCB1/INI1 and human PSIP1/LEDGF isoform 1. Interacts with human KPNA3; this interaction might play a role in nuclear import of the pre-integration complex (By similarity). Interacts with human NUP153; this interaction might play a role in nuclear import of the pre-integration complex (By similarity).</text>
</comment>
<comment type="subcellular location">
    <molecule>Gag-Pol polyprotein</molecule>
    <subcellularLocation>
        <location>Host cell membrane</location>
        <topology>Lipid-anchor</topology>
    </subcellularLocation>
    <subcellularLocation>
        <location>Host endosome</location>
        <location>Host multivesicular body</location>
    </subcellularLocation>
    <text evidence="7">These locations are linked to virus assembly sites. The main location is the cell membrane, but under some circumstances, late endosomal compartments can serve as productive sites for virion assembly.</text>
</comment>
<comment type="subcellular location">
    <molecule>Matrix protein p17</molecule>
    <subcellularLocation>
        <location>Virion membrane</location>
        <topology evidence="18">Lipid-anchor</topology>
    </subcellularLocation>
    <subcellularLocation>
        <location evidence="1">Host nucleus</location>
    </subcellularLocation>
    <subcellularLocation>
        <location evidence="1">Host cytoplasm</location>
    </subcellularLocation>
</comment>
<comment type="subcellular location">
    <molecule>Capsid protein p24</molecule>
    <subcellularLocation>
        <location evidence="18">Virion</location>
    </subcellularLocation>
</comment>
<comment type="subcellular location">
    <molecule>Nucleocapsid protein p7</molecule>
    <subcellularLocation>
        <location evidence="18">Virion</location>
    </subcellularLocation>
</comment>
<comment type="subcellular location">
    <molecule>Reverse transcriptase/ribonuclease H</molecule>
    <subcellularLocation>
        <location evidence="18">Virion</location>
    </subcellularLocation>
</comment>
<comment type="subcellular location">
    <molecule>Integrase</molecule>
    <subcellularLocation>
        <location evidence="18">Virion</location>
    </subcellularLocation>
    <subcellularLocation>
        <location evidence="18">Host nucleus</location>
    </subcellularLocation>
    <subcellularLocation>
        <location evidence="18">Host cytoplasm</location>
    </subcellularLocation>
    <text evidence="18">Nuclear at initial phase, cytoplasmic at assembly.</text>
</comment>
<comment type="alternative products">
    <event type="ribosomal frameshifting"/>
    <isoform>
        <id>O89940-1</id>
        <name>Gag-Pol polyprotein</name>
        <sequence type="displayed"/>
    </isoform>
    <isoform>
        <id>O89939-1</id>
        <name>Gag polyprotein</name>
        <sequence type="external"/>
    </isoform>
    <text>Translation results in the formation of the Gag polyprotein most of the time. Ribosomal frameshifting at the gag-pol genes boundary occurs at low frequency and produces the Gag-Pol polyprotein. This strategy of translation probably allows the virus to modulate the quantity of each viral protein. Maintenance of a correct Gag to Gag-Pol ratio is essential for RNA dimerization and viral infectivity.</text>
</comment>
<comment type="domain">
    <molecule>Reverse transcriptase/ribonuclease H</molecule>
    <text evidence="1">RT is structured in five subdomains: finger, palm, thumb, connection and RNase H. Within the palm subdomain, the 'primer grip' region is thought to be involved in the positioning of the primer terminus for accommodating the incoming nucleotide. The RNase H domain stabilizes the association of RT with primer-template.</text>
</comment>
<comment type="domain">
    <molecule>Reverse transcriptase/ribonuclease H</molecule>
    <text evidence="1">The tryptophan repeat motif is involved in RT p66/p51 dimerization (By similarity).</text>
</comment>
<comment type="domain">
    <molecule>Integrase</molecule>
    <text evidence="1">The core domain contains the D-x(n)-D-x(35)-E motif, named for the phylogenetically conserved glutamic acid and aspartic acid residues and the invariant 35 amino acid spacing between the second and third acidic residues. Each acidic residue of the D,D(35)E motif is independently essential for the 3'-processing and strand transfer activities of purified integrase protein.</text>
</comment>
<comment type="PTM">
    <molecule>Gag-Pol polyprotein</molecule>
    <text evidence="5 11">Specific enzymatic cleavages by the viral protease yield mature proteins. The protease is released by autocatalytic cleavage. The polyprotein is cleaved during and after budding, this process is termed maturation. Proteolytic cleavage of p66 RT removes the RNase H domain to yield the p51 RT subunit. Nucleocapsid protein p7 might be further cleaved after virus entry.</text>
</comment>
<comment type="PTM">
    <molecule>Matrix protein p17</molecule>
    <text evidence="5">Tyrosine phosphorylated presumably in the virion by a host kinase. Phosphorylation is apparently not a major regulator of membrane association.</text>
</comment>
<comment type="PTM">
    <molecule>Capsid protein p24</molecule>
    <text evidence="6">Phosphorylated possibly by host MAPK1; this phosphorylation is necessary for Pin1-mediated virion uncoating.</text>
</comment>
<comment type="PTM">
    <molecule>Nucleocapsid protein p7</molecule>
    <text evidence="2">Methylated by host PRMT6, impairing its function by reducing RNA annealing and the initiation of reverse transcription.</text>
</comment>
<comment type="miscellaneous">
    <molecule>Reverse transcriptase/ribonuclease H</molecule>
    <text evidence="1">Error-prone enzyme that lacks a proof-reading function. High mutations rate is a direct consequence of this characteristic. RT also displays frequent template switching leading to high recombination rate. Recombination mostly occurs between homologous regions of the two copackaged RNA genomes. If these two RNA molecules derive from different viral strains, reverse transcription will give rise to highly recombinated proviral DNAs.</text>
</comment>
<comment type="miscellaneous">
    <text>HIV-1 lineages are divided in three main groups, M (for Major), O (for Outlier), and N (for New, or Non-M, Non-O). The vast majority of strains found worldwide belong to the group M. Group O seems to be endemic to and largely confined to Cameroon and neighboring countries in West Central Africa, where these viruses represent a small minority of HIV-1 strains. The group N is represented by a limited number of isolates from Cameroonian persons. The group M is further subdivided in 9 clades or subtypes (A to D, F to H, J and K).</text>
</comment>
<comment type="miscellaneous">
    <text>Resistance to inhibitors associated with mutations are observed both in viral protease and in reverse transcriptase. Most of the time, single mutations confer only a modest reduction in drug susceptibility. Combination of several mutations is usually required to develop a high-level drug resistance. These mutations are predominantly found in clade B viruses and not in other genotypes. They are listed in the clade B representative isolate HXB2 (AC P04585).</text>
</comment>
<comment type="miscellaneous">
    <molecule>Isoform Gag-Pol polyprotein</molecule>
    <text>Produced by -1 ribosomal frameshifting.</text>
</comment>
<comment type="online information" name="HIV drug resistance mutations">
    <link uri="https://www.iasusa.org/hiv-drug-resistance/hiv-drug-resistance-mutations/"/>
</comment>
<comment type="online information" name="hivdb">
    <link uri="https://hivdb.stanford.edu"/>
    <text>HIV drug resistance database</text>
</comment>
<proteinExistence type="inferred from homology"/>
<organismHost>
    <name type="scientific">Homo sapiens</name>
    <name type="common">Human</name>
    <dbReference type="NCBI Taxonomy" id="9606"/>
</organismHost>